<reference key="1">
    <citation type="journal article" date="2011" name="J. Bacteriol.">
        <title>Whole-genome sequences of thirteen isolates of Borrelia burgdorferi.</title>
        <authorList>
            <person name="Schutzer S.E."/>
            <person name="Fraser-Liggett C.M."/>
            <person name="Casjens S.R."/>
            <person name="Qiu W.G."/>
            <person name="Dunn J.J."/>
            <person name="Mongodin E.F."/>
            <person name="Luft B.J."/>
        </authorList>
    </citation>
    <scope>NUCLEOTIDE SEQUENCE [LARGE SCALE GENOMIC DNA]</scope>
    <source>
        <strain>ZS7</strain>
    </source>
</reference>
<proteinExistence type="inferred from homology"/>
<name>GLYA_BORBZ</name>
<comment type="function">
    <text evidence="1">Catalyzes the reversible interconversion of serine and glycine with tetrahydrofolate (THF) serving as the one-carbon carrier. This reaction serves as the major source of one-carbon groups required for the biosynthesis of purines, thymidylate, methionine, and other important biomolecules. Also exhibits THF-independent aldolase activity toward beta-hydroxyamino acids, producing glycine and aldehydes, via a retro-aldol mechanism.</text>
</comment>
<comment type="catalytic activity">
    <reaction evidence="1">
        <text>(6R)-5,10-methylene-5,6,7,8-tetrahydrofolate + glycine + H2O = (6S)-5,6,7,8-tetrahydrofolate + L-serine</text>
        <dbReference type="Rhea" id="RHEA:15481"/>
        <dbReference type="ChEBI" id="CHEBI:15377"/>
        <dbReference type="ChEBI" id="CHEBI:15636"/>
        <dbReference type="ChEBI" id="CHEBI:33384"/>
        <dbReference type="ChEBI" id="CHEBI:57305"/>
        <dbReference type="ChEBI" id="CHEBI:57453"/>
        <dbReference type="EC" id="2.1.2.1"/>
    </reaction>
</comment>
<comment type="cofactor">
    <cofactor evidence="1">
        <name>pyridoxal 5'-phosphate</name>
        <dbReference type="ChEBI" id="CHEBI:597326"/>
    </cofactor>
</comment>
<comment type="pathway">
    <text evidence="1">One-carbon metabolism; tetrahydrofolate interconversion.</text>
</comment>
<comment type="pathway">
    <text evidence="1">Amino-acid biosynthesis; glycine biosynthesis; glycine from L-serine: step 1/1.</text>
</comment>
<comment type="subunit">
    <text evidence="1">Homodimer.</text>
</comment>
<comment type="subcellular location">
    <subcellularLocation>
        <location evidence="1">Cytoplasm</location>
    </subcellularLocation>
</comment>
<comment type="similarity">
    <text evidence="1">Belongs to the SHMT family.</text>
</comment>
<keyword id="KW-0028">Amino-acid biosynthesis</keyword>
<keyword id="KW-0963">Cytoplasm</keyword>
<keyword id="KW-0554">One-carbon metabolism</keyword>
<keyword id="KW-0663">Pyridoxal phosphate</keyword>
<keyword id="KW-0808">Transferase</keyword>
<accession>B7J2G3</accession>
<gene>
    <name evidence="1" type="primary">glyA</name>
    <name type="ordered locus">BbuZS7_0615</name>
</gene>
<feature type="chain" id="PRO_1000116822" description="Serine hydroxymethyltransferase">
    <location>
        <begin position="1"/>
        <end position="417"/>
    </location>
</feature>
<feature type="binding site" evidence="1">
    <location>
        <position position="112"/>
    </location>
    <ligand>
        <name>(6S)-5,6,7,8-tetrahydrofolate</name>
        <dbReference type="ChEBI" id="CHEBI:57453"/>
    </ligand>
</feature>
<feature type="binding site" evidence="1">
    <location>
        <begin position="116"/>
        <end position="118"/>
    </location>
    <ligand>
        <name>(6S)-5,6,7,8-tetrahydrofolate</name>
        <dbReference type="ChEBI" id="CHEBI:57453"/>
    </ligand>
</feature>
<feature type="binding site" evidence="1">
    <location>
        <position position="247"/>
    </location>
    <ligand>
        <name>(6S)-5,6,7,8-tetrahydrofolate</name>
        <dbReference type="ChEBI" id="CHEBI:57453"/>
    </ligand>
</feature>
<feature type="site" description="Plays an important role in substrate specificity" evidence="1">
    <location>
        <position position="220"/>
    </location>
</feature>
<feature type="modified residue" description="N6-(pyridoxal phosphate)lysine" evidence="1">
    <location>
        <position position="221"/>
    </location>
</feature>
<sequence>MRDDQIFNLIEKEKLREREHIELIASENFTSLEIRQAVGSILTNKYAEGYPLNRYYGGCSFIDEIETLAISRAKELFGAKYANVQPHSGSQANMAAIMALISPGDRILGMQLSHGGHLTHGSRVNFSGIFFNTYFYGVSRDSELIDYDEVLKIAKDCRPNLIIAGASSYSREIDFKKFREIADDVSAYLLCDIAHIAGLIVAGFHNSSIDVAHLTTSTTHKTLRGPRGGIILSGKDFDKLVNFNGKEKPLFNAVNSTVFPGTQGGPLVHVIAGKAIAFKEALQESFKEYIANVIKNTKVMAEYFKSEGFRIVSGGTDNHLFLVDLSSSDLTGADAEKLLESVNITLNKNAIPFDKKSPSLASGIRIGGAAITSRGLNESDSLNVAKFIVRALKAKSDIELKQIKKEVVRFIRDFDMP</sequence>
<protein>
    <recommendedName>
        <fullName evidence="1">Serine hydroxymethyltransferase</fullName>
        <shortName evidence="1">SHMT</shortName>
        <shortName evidence="1">Serine methylase</shortName>
        <ecNumber evidence="1">2.1.2.1</ecNumber>
    </recommendedName>
</protein>
<evidence type="ECO:0000255" key="1">
    <source>
        <dbReference type="HAMAP-Rule" id="MF_00051"/>
    </source>
</evidence>
<dbReference type="EC" id="2.1.2.1" evidence="1"/>
<dbReference type="EMBL" id="CP001205">
    <property type="protein sequence ID" value="ACK74545.1"/>
    <property type="molecule type" value="Genomic_DNA"/>
</dbReference>
<dbReference type="RefSeq" id="WP_002656965.1">
    <property type="nucleotide sequence ID" value="NC_011728.1"/>
</dbReference>
<dbReference type="SMR" id="B7J2G3"/>
<dbReference type="GeneID" id="56568034"/>
<dbReference type="KEGG" id="bbz:BbuZS7_0615"/>
<dbReference type="HOGENOM" id="CLU_022477_2_1_12"/>
<dbReference type="UniPathway" id="UPA00193"/>
<dbReference type="UniPathway" id="UPA00288">
    <property type="reaction ID" value="UER01023"/>
</dbReference>
<dbReference type="Proteomes" id="UP000006901">
    <property type="component" value="Chromosome"/>
</dbReference>
<dbReference type="GO" id="GO:0005829">
    <property type="term" value="C:cytosol"/>
    <property type="evidence" value="ECO:0007669"/>
    <property type="project" value="TreeGrafter"/>
</dbReference>
<dbReference type="GO" id="GO:0004372">
    <property type="term" value="F:glycine hydroxymethyltransferase activity"/>
    <property type="evidence" value="ECO:0007669"/>
    <property type="project" value="UniProtKB-UniRule"/>
</dbReference>
<dbReference type="GO" id="GO:0030170">
    <property type="term" value="F:pyridoxal phosphate binding"/>
    <property type="evidence" value="ECO:0007669"/>
    <property type="project" value="UniProtKB-UniRule"/>
</dbReference>
<dbReference type="GO" id="GO:0019264">
    <property type="term" value="P:glycine biosynthetic process from serine"/>
    <property type="evidence" value="ECO:0007669"/>
    <property type="project" value="UniProtKB-UniRule"/>
</dbReference>
<dbReference type="GO" id="GO:0035999">
    <property type="term" value="P:tetrahydrofolate interconversion"/>
    <property type="evidence" value="ECO:0007669"/>
    <property type="project" value="UniProtKB-UniRule"/>
</dbReference>
<dbReference type="CDD" id="cd00378">
    <property type="entry name" value="SHMT"/>
    <property type="match status" value="1"/>
</dbReference>
<dbReference type="FunFam" id="3.40.640.10:FF:000001">
    <property type="entry name" value="Serine hydroxymethyltransferase"/>
    <property type="match status" value="1"/>
</dbReference>
<dbReference type="Gene3D" id="3.90.1150.10">
    <property type="entry name" value="Aspartate Aminotransferase, domain 1"/>
    <property type="match status" value="1"/>
</dbReference>
<dbReference type="Gene3D" id="3.40.640.10">
    <property type="entry name" value="Type I PLP-dependent aspartate aminotransferase-like (Major domain)"/>
    <property type="match status" value="1"/>
</dbReference>
<dbReference type="HAMAP" id="MF_00051">
    <property type="entry name" value="SHMT"/>
    <property type="match status" value="1"/>
</dbReference>
<dbReference type="InterPro" id="IPR015424">
    <property type="entry name" value="PyrdxlP-dep_Trfase"/>
</dbReference>
<dbReference type="InterPro" id="IPR015421">
    <property type="entry name" value="PyrdxlP-dep_Trfase_major"/>
</dbReference>
<dbReference type="InterPro" id="IPR015422">
    <property type="entry name" value="PyrdxlP-dep_Trfase_small"/>
</dbReference>
<dbReference type="InterPro" id="IPR001085">
    <property type="entry name" value="Ser_HO-MeTrfase"/>
</dbReference>
<dbReference type="InterPro" id="IPR049943">
    <property type="entry name" value="Ser_HO-MeTrfase-like"/>
</dbReference>
<dbReference type="InterPro" id="IPR019798">
    <property type="entry name" value="Ser_HO-MeTrfase_PLP_BS"/>
</dbReference>
<dbReference type="InterPro" id="IPR039429">
    <property type="entry name" value="SHMT-like_dom"/>
</dbReference>
<dbReference type="NCBIfam" id="NF000586">
    <property type="entry name" value="PRK00011.1"/>
    <property type="match status" value="1"/>
</dbReference>
<dbReference type="PANTHER" id="PTHR11680">
    <property type="entry name" value="SERINE HYDROXYMETHYLTRANSFERASE"/>
    <property type="match status" value="1"/>
</dbReference>
<dbReference type="PANTHER" id="PTHR11680:SF35">
    <property type="entry name" value="SERINE HYDROXYMETHYLTRANSFERASE 1"/>
    <property type="match status" value="1"/>
</dbReference>
<dbReference type="Pfam" id="PF00464">
    <property type="entry name" value="SHMT"/>
    <property type="match status" value="1"/>
</dbReference>
<dbReference type="PIRSF" id="PIRSF000412">
    <property type="entry name" value="SHMT"/>
    <property type="match status" value="1"/>
</dbReference>
<dbReference type="SUPFAM" id="SSF53383">
    <property type="entry name" value="PLP-dependent transferases"/>
    <property type="match status" value="1"/>
</dbReference>
<dbReference type="PROSITE" id="PS00096">
    <property type="entry name" value="SHMT"/>
    <property type="match status" value="1"/>
</dbReference>
<organism>
    <name type="scientific">Borreliella burgdorferi (strain ZS7)</name>
    <name type="common">Borrelia burgdorferi</name>
    <dbReference type="NCBI Taxonomy" id="445985"/>
    <lineage>
        <taxon>Bacteria</taxon>
        <taxon>Pseudomonadati</taxon>
        <taxon>Spirochaetota</taxon>
        <taxon>Spirochaetia</taxon>
        <taxon>Spirochaetales</taxon>
        <taxon>Borreliaceae</taxon>
        <taxon>Borreliella</taxon>
    </lineage>
</organism>